<keyword id="KW-0175">Coiled coil</keyword>
<keyword id="KW-0539">Nucleus</keyword>
<keyword id="KW-1185">Reference proteome</keyword>
<keyword id="KW-0698">rRNA processing</keyword>
<comment type="function">
    <text evidence="1">Involved in rRNA processing.</text>
</comment>
<comment type="subcellular location">
    <subcellularLocation>
        <location evidence="1">Nucleus</location>
        <location evidence="1">Nucleolus</location>
    </subcellularLocation>
</comment>
<comment type="similarity">
    <text evidence="4">Belongs to the EFG1 family.</text>
</comment>
<reference key="1">
    <citation type="journal article" date="2011" name="PLoS Genet.">
        <title>Genomic analysis of the necrotrophic fungal pathogens Sclerotinia sclerotiorum and Botrytis cinerea.</title>
        <authorList>
            <person name="Amselem J."/>
            <person name="Cuomo C.A."/>
            <person name="van Kan J.A.L."/>
            <person name="Viaud M."/>
            <person name="Benito E.P."/>
            <person name="Couloux A."/>
            <person name="Coutinho P.M."/>
            <person name="de Vries R.P."/>
            <person name="Dyer P.S."/>
            <person name="Fillinger S."/>
            <person name="Fournier E."/>
            <person name="Gout L."/>
            <person name="Hahn M."/>
            <person name="Kohn L."/>
            <person name="Lapalu N."/>
            <person name="Plummer K.M."/>
            <person name="Pradier J.-M."/>
            <person name="Quevillon E."/>
            <person name="Sharon A."/>
            <person name="Simon A."/>
            <person name="ten Have A."/>
            <person name="Tudzynski B."/>
            <person name="Tudzynski P."/>
            <person name="Wincker P."/>
            <person name="Andrew M."/>
            <person name="Anthouard V."/>
            <person name="Beever R.E."/>
            <person name="Beffa R."/>
            <person name="Benoit I."/>
            <person name="Bouzid O."/>
            <person name="Brault B."/>
            <person name="Chen Z."/>
            <person name="Choquer M."/>
            <person name="Collemare J."/>
            <person name="Cotton P."/>
            <person name="Danchin E.G."/>
            <person name="Da Silva C."/>
            <person name="Gautier A."/>
            <person name="Giraud C."/>
            <person name="Giraud T."/>
            <person name="Gonzalez C."/>
            <person name="Grossetete S."/>
            <person name="Gueldener U."/>
            <person name="Henrissat B."/>
            <person name="Howlett B.J."/>
            <person name="Kodira C."/>
            <person name="Kretschmer M."/>
            <person name="Lappartient A."/>
            <person name="Leroch M."/>
            <person name="Levis C."/>
            <person name="Mauceli E."/>
            <person name="Neuveglise C."/>
            <person name="Oeser B."/>
            <person name="Pearson M."/>
            <person name="Poulain J."/>
            <person name="Poussereau N."/>
            <person name="Quesneville H."/>
            <person name="Rascle C."/>
            <person name="Schumacher J."/>
            <person name="Segurens B."/>
            <person name="Sexton A."/>
            <person name="Silva E."/>
            <person name="Sirven C."/>
            <person name="Soanes D.M."/>
            <person name="Talbot N.J."/>
            <person name="Templeton M."/>
            <person name="Yandava C."/>
            <person name="Yarden O."/>
            <person name="Zeng Q."/>
            <person name="Rollins J.A."/>
            <person name="Lebrun M.-H."/>
            <person name="Dickman M."/>
        </authorList>
    </citation>
    <scope>NUCLEOTIDE SEQUENCE [LARGE SCALE GENOMIC DNA]</scope>
    <source>
        <strain>ATCC 18683 / 1980 / Ss-1</strain>
    </source>
</reference>
<evidence type="ECO:0000250" key="1"/>
<evidence type="ECO:0000255" key="2"/>
<evidence type="ECO:0000256" key="3">
    <source>
        <dbReference type="SAM" id="MobiDB-lite"/>
    </source>
</evidence>
<evidence type="ECO:0000305" key="4"/>
<protein>
    <recommendedName>
        <fullName>rRNA-processing protein efg1</fullName>
    </recommendedName>
</protein>
<proteinExistence type="inferred from homology"/>
<feature type="chain" id="PRO_0000330281" description="rRNA-processing protein efg1">
    <location>
        <begin position="1"/>
        <end position="305"/>
    </location>
</feature>
<feature type="region of interest" description="Disordered" evidence="3">
    <location>
        <begin position="1"/>
        <end position="72"/>
    </location>
</feature>
<feature type="region of interest" description="Disordered" evidence="3">
    <location>
        <begin position="169"/>
        <end position="305"/>
    </location>
</feature>
<feature type="coiled-coil region" evidence="2">
    <location>
        <begin position="49"/>
        <end position="155"/>
    </location>
</feature>
<feature type="compositionally biased region" description="Basic and acidic residues" evidence="3">
    <location>
        <begin position="59"/>
        <end position="72"/>
    </location>
</feature>
<feature type="compositionally biased region" description="Basic and acidic residues" evidence="3">
    <location>
        <begin position="171"/>
        <end position="209"/>
    </location>
</feature>
<feature type="compositionally biased region" description="Polar residues" evidence="3">
    <location>
        <begin position="270"/>
        <end position="279"/>
    </location>
</feature>
<accession>A7EPT0</accession>
<dbReference type="EMBL" id="CH476629">
    <property type="protein sequence ID" value="EDO04846.1"/>
    <property type="molecule type" value="Genomic_DNA"/>
</dbReference>
<dbReference type="RefSeq" id="XP_001591883.1">
    <property type="nucleotide sequence ID" value="XM_001591833.1"/>
</dbReference>
<dbReference type="SMR" id="A7EPT0"/>
<dbReference type="FunCoup" id="A7EPT0">
    <property type="interactions" value="145"/>
</dbReference>
<dbReference type="STRING" id="665079.A7EPT0"/>
<dbReference type="EnsemblFungi" id="EDO04846">
    <property type="protein sequence ID" value="EDO04846"/>
    <property type="gene ID" value="SS1G_07329"/>
</dbReference>
<dbReference type="GeneID" id="5488025"/>
<dbReference type="KEGG" id="ssl:SS1G_07329"/>
<dbReference type="VEuPathDB" id="FungiDB:sscle_06g050010"/>
<dbReference type="eggNOG" id="KOG4484">
    <property type="taxonomic scope" value="Eukaryota"/>
</dbReference>
<dbReference type="HOGENOM" id="CLU_066912_0_0_1"/>
<dbReference type="InParanoid" id="A7EPT0"/>
<dbReference type="OMA" id="KCMEEGT"/>
<dbReference type="OrthoDB" id="47732at2759"/>
<dbReference type="Proteomes" id="UP000001312">
    <property type="component" value="Unassembled WGS sequence"/>
</dbReference>
<dbReference type="GO" id="GO:0005730">
    <property type="term" value="C:nucleolus"/>
    <property type="evidence" value="ECO:0007669"/>
    <property type="project" value="UniProtKB-SubCell"/>
</dbReference>
<dbReference type="GO" id="GO:0000462">
    <property type="term" value="P:maturation of SSU-rRNA from tricistronic rRNA transcript (SSU-rRNA, 5.8S rRNA, LSU-rRNA)"/>
    <property type="evidence" value="ECO:0000318"/>
    <property type="project" value="GO_Central"/>
</dbReference>
<dbReference type="InterPro" id="IPR019310">
    <property type="entry name" value="Efg1"/>
</dbReference>
<dbReference type="InterPro" id="IPR050786">
    <property type="entry name" value="EFG1_rRNA-proc"/>
</dbReference>
<dbReference type="PANTHER" id="PTHR33911">
    <property type="entry name" value="RRNA-PROCESSING PROTEIN EFG1"/>
    <property type="match status" value="1"/>
</dbReference>
<dbReference type="PANTHER" id="PTHR33911:SF1">
    <property type="entry name" value="RRNA-PROCESSING PROTEIN EFG1"/>
    <property type="match status" value="1"/>
</dbReference>
<dbReference type="Pfam" id="PF10153">
    <property type="entry name" value="Efg1"/>
    <property type="match status" value="1"/>
</dbReference>
<gene>
    <name type="primary">efg1</name>
    <name type="ORF">SS1G_07329</name>
</gene>
<organism>
    <name type="scientific">Sclerotinia sclerotiorum (strain ATCC 18683 / 1980 / Ss-1)</name>
    <name type="common">White mold</name>
    <name type="synonym">Whetzelinia sclerotiorum</name>
    <dbReference type="NCBI Taxonomy" id="665079"/>
    <lineage>
        <taxon>Eukaryota</taxon>
        <taxon>Fungi</taxon>
        <taxon>Dikarya</taxon>
        <taxon>Ascomycota</taxon>
        <taxon>Pezizomycotina</taxon>
        <taxon>Leotiomycetes</taxon>
        <taxon>Helotiales</taxon>
        <taxon>Sclerotiniaceae</taxon>
        <taxon>Sclerotinia</taxon>
    </lineage>
</organism>
<sequence>MAPKRKLSDSDAPEVVHPSRQVQVYGDEPKPAKKRKSEPAFNKKQAHASSVNTIKKKIRDTTRKLERAQDLPADVRVENERALAAYQQELASAEAEKIRQKMIKKYHMVRFFERQKATRQLKKLRKRLLETQSTEEVEQLKEEMHILEVDLNYTQYHPLSETYISLYPPKGSKEDAEDKADKEKPPMWKEVEKCMEEGTLDRLRNRKPDITISTTKPVKLPERKSIKHKPVPKPKLEEQAPSIDTTGMNRRQRRAQRGVKDSRATKIAKNKSTGFSKNQAFGAVEGARADEAQDGNVSDGGFFEE</sequence>
<name>EFG1P_SCLS1</name>